<feature type="chain" id="PRO_0000100834" description="Phosphoribosylaminoimidazole-succinocarboxamide synthase">
    <location>
        <begin position="1"/>
        <end position="236"/>
    </location>
</feature>
<sequence length="236" mass="27049">MEKETLLYEGKAKKLYFTDDSNVLWVEYCDQATALNGARKEQITGKGALNNQITSLIFEKLNAEGLETHFIKKLSKTEQLNKKVSIIPLEVVLRNVVAGSFAKRFGLEEGIVLEEPIVEFYYKDDALDDPFINDEHVKFLNIASDSEIEFLKKETRKINKILKKIWTEIGLTLVDFKLEFGRLADGSIILADEISPDTSRLWDAKGQHMDKDVFRRNIGDLIETYTEVLNLLEKTK</sequence>
<name>PUR7_LACLC</name>
<keyword id="KW-0067">ATP-binding</keyword>
<keyword id="KW-0436">Ligase</keyword>
<keyword id="KW-0547">Nucleotide-binding</keyword>
<keyword id="KW-0658">Purine biosynthesis</keyword>
<reference key="1">
    <citation type="journal article" date="1999" name="Mol. Gen. Genet.">
        <title>Isolation and characterization of a purC(orf)QLF operon from Lactococcus lactis MG1614.</title>
        <authorList>
            <person name="Peltonen T."/>
            <person name="Mantasala P."/>
        </authorList>
    </citation>
    <scope>NUCLEOTIDE SEQUENCE [GENOMIC DNA]</scope>
    <source>
        <strain>MG1614</strain>
    </source>
</reference>
<protein>
    <recommendedName>
        <fullName>Phosphoribosylaminoimidazole-succinocarboxamide synthase</fullName>
        <ecNumber>6.3.2.6</ecNumber>
    </recommendedName>
    <alternativeName>
        <fullName>SAICAR synthetase</fullName>
    </alternativeName>
</protein>
<gene>
    <name type="primary">purC</name>
</gene>
<accession>Q9R7D5</accession>
<evidence type="ECO:0000305" key="1"/>
<organism>
    <name type="scientific">Lactococcus lactis subsp. cremoris</name>
    <name type="common">Streptococcus cremoris</name>
    <dbReference type="NCBI Taxonomy" id="1359"/>
    <lineage>
        <taxon>Bacteria</taxon>
        <taxon>Bacillati</taxon>
        <taxon>Bacillota</taxon>
        <taxon>Bacilli</taxon>
        <taxon>Lactobacillales</taxon>
        <taxon>Streptococcaceae</taxon>
        <taxon>Lactococcus</taxon>
    </lineage>
</organism>
<proteinExistence type="inferred from homology"/>
<dbReference type="EC" id="6.3.2.6"/>
<dbReference type="EMBL" id="U64311">
    <property type="protein sequence ID" value="AAD12623.1"/>
    <property type="molecule type" value="Genomic_DNA"/>
</dbReference>
<dbReference type="PIR" id="T51698">
    <property type="entry name" value="T51698"/>
</dbReference>
<dbReference type="RefSeq" id="WP_011676479.1">
    <property type="nucleotide sequence ID" value="NZ_WJUV01000015.1"/>
</dbReference>
<dbReference type="SMR" id="Q9R7D5"/>
<dbReference type="OMA" id="EFCYKND"/>
<dbReference type="UniPathway" id="UPA00074">
    <property type="reaction ID" value="UER00131"/>
</dbReference>
<dbReference type="GO" id="GO:0005524">
    <property type="term" value="F:ATP binding"/>
    <property type="evidence" value="ECO:0007669"/>
    <property type="project" value="UniProtKB-KW"/>
</dbReference>
<dbReference type="GO" id="GO:0004639">
    <property type="term" value="F:phosphoribosylaminoimidazolesuccinocarboxamide synthase activity"/>
    <property type="evidence" value="ECO:0007669"/>
    <property type="project" value="UniProtKB-UniRule"/>
</dbReference>
<dbReference type="GO" id="GO:0006189">
    <property type="term" value="P:'de novo' IMP biosynthetic process"/>
    <property type="evidence" value="ECO:0007669"/>
    <property type="project" value="UniProtKB-UniRule"/>
</dbReference>
<dbReference type="GO" id="GO:0009236">
    <property type="term" value="P:cobalamin biosynthetic process"/>
    <property type="evidence" value="ECO:0007669"/>
    <property type="project" value="InterPro"/>
</dbReference>
<dbReference type="CDD" id="cd01415">
    <property type="entry name" value="SAICAR_synt_PurC"/>
    <property type="match status" value="1"/>
</dbReference>
<dbReference type="FunFam" id="3.30.200.20:FF:000189">
    <property type="entry name" value="Phosphoribosylaminoimidazole-succinocarboxamide synthase"/>
    <property type="match status" value="1"/>
</dbReference>
<dbReference type="FunFam" id="3.30.470.20:FF:000006">
    <property type="entry name" value="Phosphoribosylaminoimidazole-succinocarboxamide synthase"/>
    <property type="match status" value="1"/>
</dbReference>
<dbReference type="Gene3D" id="3.30.470.20">
    <property type="entry name" value="ATP-grasp fold, B domain"/>
    <property type="match status" value="1"/>
</dbReference>
<dbReference type="Gene3D" id="3.30.200.20">
    <property type="entry name" value="Phosphorylase Kinase, domain 1"/>
    <property type="match status" value="1"/>
</dbReference>
<dbReference type="HAMAP" id="MF_00137">
    <property type="entry name" value="SAICAR_synth"/>
    <property type="match status" value="1"/>
</dbReference>
<dbReference type="InterPro" id="IPR028923">
    <property type="entry name" value="SAICAR_synt/ADE2_N"/>
</dbReference>
<dbReference type="InterPro" id="IPR033934">
    <property type="entry name" value="SAICAR_synt_PurC"/>
</dbReference>
<dbReference type="InterPro" id="IPR001636">
    <property type="entry name" value="SAICAR_synth"/>
</dbReference>
<dbReference type="InterPro" id="IPR050089">
    <property type="entry name" value="SAICAR_synthetase"/>
</dbReference>
<dbReference type="InterPro" id="IPR018236">
    <property type="entry name" value="SAICAR_synthetase_CS"/>
</dbReference>
<dbReference type="NCBIfam" id="TIGR00081">
    <property type="entry name" value="purC"/>
    <property type="match status" value="1"/>
</dbReference>
<dbReference type="PANTHER" id="PTHR43599">
    <property type="entry name" value="MULTIFUNCTIONAL PROTEIN ADE2"/>
    <property type="match status" value="1"/>
</dbReference>
<dbReference type="PANTHER" id="PTHR43599:SF3">
    <property type="entry name" value="SI:DKEY-6E2.2"/>
    <property type="match status" value="1"/>
</dbReference>
<dbReference type="Pfam" id="PF01259">
    <property type="entry name" value="SAICAR_synt"/>
    <property type="match status" value="1"/>
</dbReference>
<dbReference type="SUPFAM" id="SSF56104">
    <property type="entry name" value="SAICAR synthase-like"/>
    <property type="match status" value="1"/>
</dbReference>
<dbReference type="PROSITE" id="PS01057">
    <property type="entry name" value="SAICAR_SYNTHETASE_1"/>
    <property type="match status" value="1"/>
</dbReference>
<dbReference type="PROSITE" id="PS01058">
    <property type="entry name" value="SAICAR_SYNTHETASE_2"/>
    <property type="match status" value="1"/>
</dbReference>
<comment type="catalytic activity">
    <reaction>
        <text>5-amino-1-(5-phospho-D-ribosyl)imidazole-4-carboxylate + L-aspartate + ATP = (2S)-2-[5-amino-1-(5-phospho-beta-D-ribosyl)imidazole-4-carboxamido]succinate + ADP + phosphate + 2 H(+)</text>
        <dbReference type="Rhea" id="RHEA:22628"/>
        <dbReference type="ChEBI" id="CHEBI:15378"/>
        <dbReference type="ChEBI" id="CHEBI:29991"/>
        <dbReference type="ChEBI" id="CHEBI:30616"/>
        <dbReference type="ChEBI" id="CHEBI:43474"/>
        <dbReference type="ChEBI" id="CHEBI:58443"/>
        <dbReference type="ChEBI" id="CHEBI:77657"/>
        <dbReference type="ChEBI" id="CHEBI:456216"/>
        <dbReference type="EC" id="6.3.2.6"/>
    </reaction>
</comment>
<comment type="pathway">
    <text>Purine metabolism; IMP biosynthesis via de novo pathway; 5-amino-1-(5-phospho-D-ribosyl)imidazole-4-carboxamide from 5-amino-1-(5-phospho-D-ribosyl)imidazole-4-carboxylate: step 1/2.</text>
</comment>
<comment type="similarity">
    <text evidence="1">Belongs to the SAICAR synthetase family.</text>
</comment>